<proteinExistence type="inferred from homology"/>
<feature type="chain" id="PRO_0000387049" description="Ribosomal RNA small subunit methyltransferase H">
    <location>
        <begin position="1"/>
        <end position="313"/>
    </location>
</feature>
<feature type="binding site" evidence="1">
    <location>
        <begin position="35"/>
        <end position="37"/>
    </location>
    <ligand>
        <name>S-adenosyl-L-methionine</name>
        <dbReference type="ChEBI" id="CHEBI:59789"/>
    </ligand>
</feature>
<feature type="binding site" evidence="1">
    <location>
        <position position="55"/>
    </location>
    <ligand>
        <name>S-adenosyl-L-methionine</name>
        <dbReference type="ChEBI" id="CHEBI:59789"/>
    </ligand>
</feature>
<feature type="binding site" evidence="1">
    <location>
        <position position="81"/>
    </location>
    <ligand>
        <name>S-adenosyl-L-methionine</name>
        <dbReference type="ChEBI" id="CHEBI:59789"/>
    </ligand>
</feature>
<feature type="binding site" evidence="1">
    <location>
        <position position="103"/>
    </location>
    <ligand>
        <name>S-adenosyl-L-methionine</name>
        <dbReference type="ChEBI" id="CHEBI:59789"/>
    </ligand>
</feature>
<feature type="binding site" evidence="1">
    <location>
        <position position="110"/>
    </location>
    <ligand>
        <name>S-adenosyl-L-methionine</name>
        <dbReference type="ChEBI" id="CHEBI:59789"/>
    </ligand>
</feature>
<accession>B7UZJ8</accession>
<keyword id="KW-0963">Cytoplasm</keyword>
<keyword id="KW-0489">Methyltransferase</keyword>
<keyword id="KW-0698">rRNA processing</keyword>
<keyword id="KW-0949">S-adenosyl-L-methionine</keyword>
<keyword id="KW-0808">Transferase</keyword>
<name>RSMH_PSEA8</name>
<evidence type="ECO:0000255" key="1">
    <source>
        <dbReference type="HAMAP-Rule" id="MF_01007"/>
    </source>
</evidence>
<sequence length="313" mass="34624">MNATYRHITVLLEEAVSALAPREDGCYLDGTFGRGGHSRALLEKLGAGGRLLGFDKDPQAIQTGKALAAEDGRFVIVQRSFAELGDEVRARGLEGRIDGVLLDLGVSSPQLDDPERGFSFLNDGPLDMRMNPGQGISAAEFIANAAEEEIARVFKEYGEERFAKRMARAIVQRRQERPFERTADLAEVITVANPAWEKGKNPATRAFQGLRIHVNNELGDLERGLDAALESLAVGGRLVVISFHSLEDRIVKLFMRKHAKGEADNLPRDLPIRSKVFEPRLKLLGKPQYASEEELKANPRSRSAVMRVAEKLR</sequence>
<protein>
    <recommendedName>
        <fullName evidence="1">Ribosomal RNA small subunit methyltransferase H</fullName>
        <ecNumber evidence="1">2.1.1.199</ecNumber>
    </recommendedName>
    <alternativeName>
        <fullName evidence="1">16S rRNA m(4)C1402 methyltransferase</fullName>
    </alternativeName>
    <alternativeName>
        <fullName evidence="1">rRNA (cytosine-N(4)-)-methyltransferase RsmH</fullName>
    </alternativeName>
</protein>
<gene>
    <name evidence="1" type="primary">rsmH</name>
    <name type="synonym">mraW</name>
    <name type="ordered locus">PLES_47991</name>
</gene>
<comment type="function">
    <text evidence="1">Specifically methylates the N4 position of cytidine in position 1402 (C1402) of 16S rRNA.</text>
</comment>
<comment type="catalytic activity">
    <reaction evidence="1">
        <text>cytidine(1402) in 16S rRNA + S-adenosyl-L-methionine = N(4)-methylcytidine(1402) in 16S rRNA + S-adenosyl-L-homocysteine + H(+)</text>
        <dbReference type="Rhea" id="RHEA:42928"/>
        <dbReference type="Rhea" id="RHEA-COMP:10286"/>
        <dbReference type="Rhea" id="RHEA-COMP:10287"/>
        <dbReference type="ChEBI" id="CHEBI:15378"/>
        <dbReference type="ChEBI" id="CHEBI:57856"/>
        <dbReference type="ChEBI" id="CHEBI:59789"/>
        <dbReference type="ChEBI" id="CHEBI:74506"/>
        <dbReference type="ChEBI" id="CHEBI:82748"/>
        <dbReference type="EC" id="2.1.1.199"/>
    </reaction>
</comment>
<comment type="subcellular location">
    <subcellularLocation>
        <location evidence="1">Cytoplasm</location>
    </subcellularLocation>
</comment>
<comment type="similarity">
    <text evidence="1">Belongs to the methyltransferase superfamily. RsmH family.</text>
</comment>
<dbReference type="EC" id="2.1.1.199" evidence="1"/>
<dbReference type="EMBL" id="FM209186">
    <property type="protein sequence ID" value="CAW29553.1"/>
    <property type="molecule type" value="Genomic_DNA"/>
</dbReference>
<dbReference type="RefSeq" id="WP_003103102.1">
    <property type="nucleotide sequence ID" value="NC_011770.1"/>
</dbReference>
<dbReference type="SMR" id="B7UZJ8"/>
<dbReference type="KEGG" id="pag:PLES_47991"/>
<dbReference type="HOGENOM" id="CLU_038422_2_0_6"/>
<dbReference type="GO" id="GO:0005737">
    <property type="term" value="C:cytoplasm"/>
    <property type="evidence" value="ECO:0007669"/>
    <property type="project" value="UniProtKB-SubCell"/>
</dbReference>
<dbReference type="GO" id="GO:0071424">
    <property type="term" value="F:rRNA (cytosine-N4-)-methyltransferase activity"/>
    <property type="evidence" value="ECO:0007669"/>
    <property type="project" value="UniProtKB-UniRule"/>
</dbReference>
<dbReference type="GO" id="GO:0070475">
    <property type="term" value="P:rRNA base methylation"/>
    <property type="evidence" value="ECO:0007669"/>
    <property type="project" value="UniProtKB-UniRule"/>
</dbReference>
<dbReference type="FunFam" id="1.10.150.170:FF:000003">
    <property type="entry name" value="Ribosomal RNA small subunit methyltransferase H"/>
    <property type="match status" value="1"/>
</dbReference>
<dbReference type="Gene3D" id="1.10.150.170">
    <property type="entry name" value="Putative methyltransferase TM0872, insert domain"/>
    <property type="match status" value="1"/>
</dbReference>
<dbReference type="Gene3D" id="3.40.50.150">
    <property type="entry name" value="Vaccinia Virus protein VP39"/>
    <property type="match status" value="1"/>
</dbReference>
<dbReference type="HAMAP" id="MF_01007">
    <property type="entry name" value="16SrRNA_methyltr_H"/>
    <property type="match status" value="1"/>
</dbReference>
<dbReference type="InterPro" id="IPR002903">
    <property type="entry name" value="RsmH"/>
</dbReference>
<dbReference type="InterPro" id="IPR023397">
    <property type="entry name" value="SAM-dep_MeTrfase_MraW_recog"/>
</dbReference>
<dbReference type="InterPro" id="IPR029063">
    <property type="entry name" value="SAM-dependent_MTases_sf"/>
</dbReference>
<dbReference type="NCBIfam" id="TIGR00006">
    <property type="entry name" value="16S rRNA (cytosine(1402)-N(4))-methyltransferase RsmH"/>
    <property type="match status" value="1"/>
</dbReference>
<dbReference type="PANTHER" id="PTHR11265:SF0">
    <property type="entry name" value="12S RRNA N4-METHYLCYTIDINE METHYLTRANSFERASE"/>
    <property type="match status" value="1"/>
</dbReference>
<dbReference type="PANTHER" id="PTHR11265">
    <property type="entry name" value="S-ADENOSYL-METHYLTRANSFERASE MRAW"/>
    <property type="match status" value="1"/>
</dbReference>
<dbReference type="Pfam" id="PF01795">
    <property type="entry name" value="Methyltransf_5"/>
    <property type="match status" value="1"/>
</dbReference>
<dbReference type="PIRSF" id="PIRSF004486">
    <property type="entry name" value="MraW"/>
    <property type="match status" value="1"/>
</dbReference>
<dbReference type="SUPFAM" id="SSF81799">
    <property type="entry name" value="Putative methyltransferase TM0872, insert domain"/>
    <property type="match status" value="1"/>
</dbReference>
<dbReference type="SUPFAM" id="SSF53335">
    <property type="entry name" value="S-adenosyl-L-methionine-dependent methyltransferases"/>
    <property type="match status" value="1"/>
</dbReference>
<reference key="1">
    <citation type="journal article" date="2009" name="Genome Res.">
        <title>Newly introduced genomic prophage islands are critical determinants of in vivo competitiveness in the Liverpool epidemic strain of Pseudomonas aeruginosa.</title>
        <authorList>
            <person name="Winstanley C."/>
            <person name="Langille M.G.I."/>
            <person name="Fothergill J.L."/>
            <person name="Kukavica-Ibrulj I."/>
            <person name="Paradis-Bleau C."/>
            <person name="Sanschagrin F."/>
            <person name="Thomson N.R."/>
            <person name="Winsor G.L."/>
            <person name="Quail M.A."/>
            <person name="Lennard N."/>
            <person name="Bignell A."/>
            <person name="Clarke L."/>
            <person name="Seeger K."/>
            <person name="Saunders D."/>
            <person name="Harris D."/>
            <person name="Parkhill J."/>
            <person name="Hancock R.E.W."/>
            <person name="Brinkman F.S.L."/>
            <person name="Levesque R.C."/>
        </authorList>
    </citation>
    <scope>NUCLEOTIDE SEQUENCE [LARGE SCALE GENOMIC DNA]</scope>
    <source>
        <strain>LESB58</strain>
    </source>
</reference>
<organism>
    <name type="scientific">Pseudomonas aeruginosa (strain LESB58)</name>
    <dbReference type="NCBI Taxonomy" id="557722"/>
    <lineage>
        <taxon>Bacteria</taxon>
        <taxon>Pseudomonadati</taxon>
        <taxon>Pseudomonadota</taxon>
        <taxon>Gammaproteobacteria</taxon>
        <taxon>Pseudomonadales</taxon>
        <taxon>Pseudomonadaceae</taxon>
        <taxon>Pseudomonas</taxon>
    </lineage>
</organism>